<feature type="chain" id="PRO_0000365699" description="Adenylate kinase">
    <location>
        <begin position="1"/>
        <end position="257"/>
    </location>
</feature>
<feature type="region of interest" description="NMP" evidence="1">
    <location>
        <begin position="67"/>
        <end position="96"/>
    </location>
</feature>
<feature type="region of interest" description="LID" evidence="1">
    <location>
        <begin position="163"/>
        <end position="200"/>
    </location>
</feature>
<feature type="binding site" evidence="1">
    <location>
        <begin position="47"/>
        <end position="52"/>
    </location>
    <ligand>
        <name>ATP</name>
        <dbReference type="ChEBI" id="CHEBI:30616"/>
    </ligand>
</feature>
<feature type="binding site" evidence="1">
    <location>
        <position position="68"/>
    </location>
    <ligand>
        <name>AMP</name>
        <dbReference type="ChEBI" id="CHEBI:456215"/>
    </ligand>
</feature>
<feature type="binding site" evidence="1">
    <location>
        <position position="73"/>
    </location>
    <ligand>
        <name>AMP</name>
        <dbReference type="ChEBI" id="CHEBI:456215"/>
    </ligand>
</feature>
<feature type="binding site" evidence="1">
    <location>
        <begin position="94"/>
        <end position="96"/>
    </location>
    <ligand>
        <name>AMP</name>
        <dbReference type="ChEBI" id="CHEBI:456215"/>
    </ligand>
</feature>
<feature type="binding site" evidence="1">
    <location>
        <begin position="122"/>
        <end position="125"/>
    </location>
    <ligand>
        <name>AMP</name>
        <dbReference type="ChEBI" id="CHEBI:456215"/>
    </ligand>
</feature>
<feature type="binding site" evidence="1">
    <location>
        <position position="129"/>
    </location>
    <ligand>
        <name>AMP</name>
        <dbReference type="ChEBI" id="CHEBI:456215"/>
    </ligand>
</feature>
<feature type="binding site" evidence="1">
    <location>
        <position position="164"/>
    </location>
    <ligand>
        <name>ATP</name>
        <dbReference type="ChEBI" id="CHEBI:30616"/>
    </ligand>
</feature>
<feature type="binding site" evidence="1">
    <location>
        <begin position="173"/>
        <end position="174"/>
    </location>
    <ligand>
        <name>ATP</name>
        <dbReference type="ChEBI" id="CHEBI:30616"/>
    </ligand>
</feature>
<feature type="binding site" evidence="1">
    <location>
        <position position="197"/>
    </location>
    <ligand>
        <name>AMP</name>
        <dbReference type="ChEBI" id="CHEBI:456215"/>
    </ligand>
</feature>
<feature type="binding site" evidence="1">
    <location>
        <position position="208"/>
    </location>
    <ligand>
        <name>AMP</name>
        <dbReference type="ChEBI" id="CHEBI:456215"/>
    </ligand>
</feature>
<feature type="binding site" evidence="1">
    <location>
        <position position="236"/>
    </location>
    <ligand>
        <name>ATP</name>
        <dbReference type="ChEBI" id="CHEBI:30616"/>
    </ligand>
</feature>
<reference key="1">
    <citation type="journal article" date="2003" name="PLoS Biol.">
        <title>The genome sequence of Caenorhabditis briggsae: a platform for comparative genomics.</title>
        <authorList>
            <person name="Stein L.D."/>
            <person name="Bao Z."/>
            <person name="Blasiar D."/>
            <person name="Blumenthal T."/>
            <person name="Brent M.R."/>
            <person name="Chen N."/>
            <person name="Chinwalla A."/>
            <person name="Clarke L."/>
            <person name="Clee C."/>
            <person name="Coghlan A."/>
            <person name="Coulson A."/>
            <person name="D'Eustachio P."/>
            <person name="Fitch D.H.A."/>
            <person name="Fulton L.A."/>
            <person name="Fulton R.E."/>
            <person name="Griffiths-Jones S."/>
            <person name="Harris T.W."/>
            <person name="Hillier L.W."/>
            <person name="Kamath R."/>
            <person name="Kuwabara P.E."/>
            <person name="Mardis E.R."/>
            <person name="Marra M.A."/>
            <person name="Miner T.L."/>
            <person name="Minx P."/>
            <person name="Mullikin J.C."/>
            <person name="Plumb R.W."/>
            <person name="Rogers J."/>
            <person name="Schein J.E."/>
            <person name="Sohrmann M."/>
            <person name="Spieth J."/>
            <person name="Stajich J.E."/>
            <person name="Wei C."/>
            <person name="Willey D."/>
            <person name="Wilson R.K."/>
            <person name="Durbin R.M."/>
            <person name="Waterston R.H."/>
        </authorList>
    </citation>
    <scope>NUCLEOTIDE SEQUENCE [LARGE SCALE GENOMIC DNA]</scope>
    <source>
        <strain>AF16</strain>
    </source>
</reference>
<comment type="function">
    <text evidence="1">Catalyzes the reversible transfer of the terminal phosphate group between ATP and AMP. Plays an important role in cellular energy homeostasis and in adenine nucleotide metabolism. Adenylate kinase activity is critical for regulation of the phosphate utilization and the AMP de novo biosynthesis pathways.</text>
</comment>
<comment type="catalytic activity">
    <reaction evidence="1">
        <text>AMP + ATP = 2 ADP</text>
        <dbReference type="Rhea" id="RHEA:12973"/>
        <dbReference type="ChEBI" id="CHEBI:30616"/>
        <dbReference type="ChEBI" id="CHEBI:456215"/>
        <dbReference type="ChEBI" id="CHEBI:456216"/>
        <dbReference type="EC" id="2.7.4.3"/>
    </reaction>
</comment>
<comment type="subunit">
    <text evidence="1">Monomer.</text>
</comment>
<comment type="subcellular location">
    <subcellularLocation>
        <location evidence="1">Cytoplasm</location>
        <location evidence="1">Cytosol</location>
    </subcellularLocation>
    <subcellularLocation>
        <location evidence="1">Mitochondrion intermembrane space</location>
    </subcellularLocation>
    <text evidence="1">Predominantly mitochondrial.</text>
</comment>
<comment type="domain">
    <text evidence="1">Consists of three domains, a large central CORE domain and two small peripheral domains, NMPbind and LID, which undergo movements during catalysis. The LID domain closes over the site of phosphoryl transfer upon ATP binding. Assembling and dissambling the active center during each catalytic cycle provides an effective means to prevent ATP hydrolysis.</text>
</comment>
<comment type="similarity">
    <text evidence="1">Belongs to the adenylate kinase family. AK2 subfamily.</text>
</comment>
<organism>
    <name type="scientific">Caenorhabditis briggsae</name>
    <dbReference type="NCBI Taxonomy" id="6238"/>
    <lineage>
        <taxon>Eukaryota</taxon>
        <taxon>Metazoa</taxon>
        <taxon>Ecdysozoa</taxon>
        <taxon>Nematoda</taxon>
        <taxon>Chromadorea</taxon>
        <taxon>Rhabditida</taxon>
        <taxon>Rhabditina</taxon>
        <taxon>Rhabditomorpha</taxon>
        <taxon>Rhabditoidea</taxon>
        <taxon>Rhabditidae</taxon>
        <taxon>Peloderinae</taxon>
        <taxon>Caenorhabditis</taxon>
    </lineage>
</organism>
<dbReference type="EC" id="2.7.4.3" evidence="1"/>
<dbReference type="EMBL" id="HE600921">
    <property type="protein sequence ID" value="CAP37989.2"/>
    <property type="molecule type" value="Genomic_DNA"/>
</dbReference>
<dbReference type="SMR" id="A8XZJ0"/>
<dbReference type="FunCoup" id="A8XZJ0">
    <property type="interactions" value="1978"/>
</dbReference>
<dbReference type="STRING" id="6238.A8XZJ0"/>
<dbReference type="WormBase" id="CBG21240">
    <property type="protein sequence ID" value="CBP42267"/>
    <property type="gene ID" value="WBGene00040075"/>
    <property type="gene designation" value="Cbr-let-754"/>
</dbReference>
<dbReference type="eggNOG" id="KOG3078">
    <property type="taxonomic scope" value="Eukaryota"/>
</dbReference>
<dbReference type="HOGENOM" id="CLU_032354_1_0_1"/>
<dbReference type="InParanoid" id="A8XZJ0"/>
<dbReference type="OMA" id="VYHEQTA"/>
<dbReference type="Proteomes" id="UP000008549">
    <property type="component" value="Unassembled WGS sequence"/>
</dbReference>
<dbReference type="GO" id="GO:0005737">
    <property type="term" value="C:cytoplasm"/>
    <property type="evidence" value="ECO:0000318"/>
    <property type="project" value="GO_Central"/>
</dbReference>
<dbReference type="GO" id="GO:0005829">
    <property type="term" value="C:cytosol"/>
    <property type="evidence" value="ECO:0007669"/>
    <property type="project" value="UniProtKB-SubCell"/>
</dbReference>
<dbReference type="GO" id="GO:0005758">
    <property type="term" value="C:mitochondrial intermembrane space"/>
    <property type="evidence" value="ECO:0007669"/>
    <property type="project" value="UniProtKB-SubCell"/>
</dbReference>
<dbReference type="GO" id="GO:0005739">
    <property type="term" value="C:mitochondrion"/>
    <property type="evidence" value="ECO:0000318"/>
    <property type="project" value="GO_Central"/>
</dbReference>
<dbReference type="GO" id="GO:0004017">
    <property type="term" value="F:adenylate kinase activity"/>
    <property type="evidence" value="ECO:0000318"/>
    <property type="project" value="GO_Central"/>
</dbReference>
<dbReference type="GO" id="GO:0005524">
    <property type="term" value="F:ATP binding"/>
    <property type="evidence" value="ECO:0007669"/>
    <property type="project" value="UniProtKB-KW"/>
</dbReference>
<dbReference type="GO" id="GO:0006172">
    <property type="term" value="P:ADP biosynthetic process"/>
    <property type="evidence" value="ECO:0000318"/>
    <property type="project" value="GO_Central"/>
</dbReference>
<dbReference type="GO" id="GO:0046033">
    <property type="term" value="P:AMP metabolic process"/>
    <property type="evidence" value="ECO:0007669"/>
    <property type="project" value="UniProtKB-UniRule"/>
</dbReference>
<dbReference type="GO" id="GO:0046034">
    <property type="term" value="P:ATP metabolic process"/>
    <property type="evidence" value="ECO:0007669"/>
    <property type="project" value="UniProtKB-UniRule"/>
</dbReference>
<dbReference type="CDD" id="cd01428">
    <property type="entry name" value="ADK"/>
    <property type="match status" value="1"/>
</dbReference>
<dbReference type="FunFam" id="3.40.50.300:FF:000106">
    <property type="entry name" value="Adenylate kinase mitochondrial"/>
    <property type="match status" value="1"/>
</dbReference>
<dbReference type="Gene3D" id="3.40.50.300">
    <property type="entry name" value="P-loop containing nucleotide triphosphate hydrolases"/>
    <property type="match status" value="1"/>
</dbReference>
<dbReference type="HAMAP" id="MF_00235">
    <property type="entry name" value="Adenylate_kinase_Adk"/>
    <property type="match status" value="1"/>
</dbReference>
<dbReference type="HAMAP" id="MF_03168">
    <property type="entry name" value="Adenylate_kinase_AK2"/>
    <property type="match status" value="1"/>
</dbReference>
<dbReference type="InterPro" id="IPR006259">
    <property type="entry name" value="Adenyl_kin_sub"/>
</dbReference>
<dbReference type="InterPro" id="IPR000850">
    <property type="entry name" value="Adenylat/UMP-CMP_kin"/>
</dbReference>
<dbReference type="InterPro" id="IPR033690">
    <property type="entry name" value="Adenylat_kinase_CS"/>
</dbReference>
<dbReference type="InterPro" id="IPR007862">
    <property type="entry name" value="Adenylate_kinase_lid-dom"/>
</dbReference>
<dbReference type="InterPro" id="IPR028587">
    <property type="entry name" value="AK2"/>
</dbReference>
<dbReference type="InterPro" id="IPR027417">
    <property type="entry name" value="P-loop_NTPase"/>
</dbReference>
<dbReference type="NCBIfam" id="TIGR01351">
    <property type="entry name" value="adk"/>
    <property type="match status" value="1"/>
</dbReference>
<dbReference type="NCBIfam" id="NF001381">
    <property type="entry name" value="PRK00279.1-3"/>
    <property type="match status" value="1"/>
</dbReference>
<dbReference type="NCBIfam" id="NF011100">
    <property type="entry name" value="PRK14527.1"/>
    <property type="match status" value="1"/>
</dbReference>
<dbReference type="PANTHER" id="PTHR23359">
    <property type="entry name" value="NUCLEOTIDE KINASE"/>
    <property type="match status" value="1"/>
</dbReference>
<dbReference type="Pfam" id="PF00406">
    <property type="entry name" value="ADK"/>
    <property type="match status" value="1"/>
</dbReference>
<dbReference type="Pfam" id="PF05191">
    <property type="entry name" value="ADK_lid"/>
    <property type="match status" value="1"/>
</dbReference>
<dbReference type="PRINTS" id="PR00094">
    <property type="entry name" value="ADENYLTKNASE"/>
</dbReference>
<dbReference type="SUPFAM" id="SSF52540">
    <property type="entry name" value="P-loop containing nucleoside triphosphate hydrolases"/>
    <property type="match status" value="1"/>
</dbReference>
<dbReference type="PROSITE" id="PS00113">
    <property type="entry name" value="ADENYLATE_KINASE"/>
    <property type="match status" value="1"/>
</dbReference>
<gene>
    <name evidence="1" type="primary">let-754</name>
    <name evidence="2" type="ORF">CBG21240</name>
</gene>
<accession>A8XZJ0</accession>
<keyword id="KW-0067">ATP-binding</keyword>
<keyword id="KW-0963">Cytoplasm</keyword>
<keyword id="KW-0418">Kinase</keyword>
<keyword id="KW-0496">Mitochondrion</keyword>
<keyword id="KW-0547">Nucleotide-binding</keyword>
<keyword id="KW-1185">Reference proteome</keyword>
<keyword id="KW-0808">Transferase</keyword>
<proteinExistence type="inferred from homology"/>
<name>KAD2_CAEBR</name>
<sequence>MDKKSDFGQIFLVPKTQPAAQPAVTPSTGPSETLARGIRAIFIGPPGSGKGTQAPAFASKYFSCHLATGDLLRAEVASGSEFGKQLKATMDAGKLVSDDVVCKLIEQKLEKPECKYGFILDGFPRTSGQAEKLDEILERRKTPLDTVVEFNIADDLLVRRITGRLFHIASGRSYHLEFKPPKVPMKDDLTGEPLIRRSDDNEETLRKRLVQYHQMTVPLVDYYQKHGVHVKVDAAKPMADVKAHIDSVFAKFTQKKV</sequence>
<evidence type="ECO:0000255" key="1">
    <source>
        <dbReference type="HAMAP-Rule" id="MF_03168"/>
    </source>
</evidence>
<evidence type="ECO:0000312" key="2">
    <source>
        <dbReference type="WormBase" id="CBG21240"/>
    </source>
</evidence>
<protein>
    <recommendedName>
        <fullName evidence="1">Adenylate kinase</fullName>
        <ecNumber evidence="1">2.7.4.3</ecNumber>
    </recommendedName>
    <alternativeName>
        <fullName evidence="1">ATP-AMP transphosphorylase</fullName>
    </alternativeName>
    <alternativeName>
        <fullName evidence="1">ATP:AMP phosphotransferase</fullName>
    </alternativeName>
    <alternativeName>
        <fullName evidence="1">Adenylate kinase cytosolic and mitochondrial</fullName>
    </alternativeName>
    <alternativeName>
        <fullName evidence="1">Adenylate monophosphate kinase</fullName>
    </alternativeName>
    <alternativeName>
        <fullName>Lethal protein 754</fullName>
    </alternativeName>
</protein>